<keyword id="KW-0030">Aminoacyl-tRNA synthetase</keyword>
<keyword id="KW-0067">ATP-binding</keyword>
<keyword id="KW-0963">Cytoplasm</keyword>
<keyword id="KW-0436">Ligase</keyword>
<keyword id="KW-0547">Nucleotide-binding</keyword>
<keyword id="KW-0648">Protein biosynthesis</keyword>
<gene>
    <name evidence="1" type="primary">serS</name>
    <name type="ordered locus">Sputw3181_2005</name>
</gene>
<sequence length="428" mass="46931">MLDPKFLRNELAVTAERLATRGFILDVAHLTQLEEKRKSLQVATEELQAARNAISKSIGQAKARGEDVDAIMAQVGDLGSQVDAKKLELAAVLEEVNAIAMSMPNLPDESAPIGADETQNVEVRRWGTPRSFDFPIKDHIDLGEGLNGLDFKSAVKITGSRFIVMKGQIARLNRALGQFMLDLHTTEHGYTEAYVPLLVNEASLLGTGQLPKFGEDLFHTKPATEEGQGLSLIPTAEVPLTNLVRDSIVDEDELPIKLTAHTACFRSEAGSYGKDTRGLIRQHQFDKVELVQLVKPEDSMAALETLTNHAETVLQRLGLPYRTVVLCTGDMGFGSSKTYDIEVWLPGQNTYREISSCSNMKDFQARRMQARYRVKADNKPALLHTLNGSGLAVGRTLVAILENYQNADGSVTIPEALRSYMGGLTQIG</sequence>
<protein>
    <recommendedName>
        <fullName evidence="1">Serine--tRNA ligase</fullName>
        <ecNumber evidence="1">6.1.1.11</ecNumber>
    </recommendedName>
    <alternativeName>
        <fullName evidence="1">Seryl-tRNA synthetase</fullName>
        <shortName evidence="1">SerRS</shortName>
    </alternativeName>
    <alternativeName>
        <fullName evidence="1">Seryl-tRNA(Ser/Sec) synthetase</fullName>
    </alternativeName>
</protein>
<dbReference type="EC" id="6.1.1.11" evidence="1"/>
<dbReference type="EMBL" id="CP000503">
    <property type="protein sequence ID" value="ABM24839.1"/>
    <property type="molecule type" value="Genomic_DNA"/>
</dbReference>
<dbReference type="RefSeq" id="WP_011789327.1">
    <property type="nucleotide sequence ID" value="NC_008750.1"/>
</dbReference>
<dbReference type="SMR" id="A1RJJ4"/>
<dbReference type="KEGG" id="shw:Sputw3181_2005"/>
<dbReference type="HOGENOM" id="CLU_023797_1_1_6"/>
<dbReference type="UniPathway" id="UPA00906">
    <property type="reaction ID" value="UER00895"/>
</dbReference>
<dbReference type="Proteomes" id="UP000002597">
    <property type="component" value="Chromosome"/>
</dbReference>
<dbReference type="GO" id="GO:0005737">
    <property type="term" value="C:cytoplasm"/>
    <property type="evidence" value="ECO:0007669"/>
    <property type="project" value="UniProtKB-SubCell"/>
</dbReference>
<dbReference type="GO" id="GO:0005524">
    <property type="term" value="F:ATP binding"/>
    <property type="evidence" value="ECO:0007669"/>
    <property type="project" value="UniProtKB-UniRule"/>
</dbReference>
<dbReference type="GO" id="GO:0004828">
    <property type="term" value="F:serine-tRNA ligase activity"/>
    <property type="evidence" value="ECO:0007669"/>
    <property type="project" value="UniProtKB-UniRule"/>
</dbReference>
<dbReference type="GO" id="GO:0016260">
    <property type="term" value="P:selenocysteine biosynthetic process"/>
    <property type="evidence" value="ECO:0007669"/>
    <property type="project" value="UniProtKB-UniRule"/>
</dbReference>
<dbReference type="GO" id="GO:0006434">
    <property type="term" value="P:seryl-tRNA aminoacylation"/>
    <property type="evidence" value="ECO:0007669"/>
    <property type="project" value="UniProtKB-UniRule"/>
</dbReference>
<dbReference type="CDD" id="cd00770">
    <property type="entry name" value="SerRS_core"/>
    <property type="match status" value="1"/>
</dbReference>
<dbReference type="Gene3D" id="3.30.930.10">
    <property type="entry name" value="Bira Bifunctional Protein, Domain 2"/>
    <property type="match status" value="1"/>
</dbReference>
<dbReference type="Gene3D" id="1.10.287.40">
    <property type="entry name" value="Serine-tRNA synthetase, tRNA binding domain"/>
    <property type="match status" value="1"/>
</dbReference>
<dbReference type="HAMAP" id="MF_00176">
    <property type="entry name" value="Ser_tRNA_synth_type1"/>
    <property type="match status" value="1"/>
</dbReference>
<dbReference type="InterPro" id="IPR002314">
    <property type="entry name" value="aa-tRNA-synt_IIb"/>
</dbReference>
<dbReference type="InterPro" id="IPR006195">
    <property type="entry name" value="aa-tRNA-synth_II"/>
</dbReference>
<dbReference type="InterPro" id="IPR045864">
    <property type="entry name" value="aa-tRNA-synth_II/BPL/LPL"/>
</dbReference>
<dbReference type="InterPro" id="IPR002317">
    <property type="entry name" value="Ser-tRNA-ligase_type_1"/>
</dbReference>
<dbReference type="InterPro" id="IPR015866">
    <property type="entry name" value="Ser-tRNA-synth_1_N"/>
</dbReference>
<dbReference type="InterPro" id="IPR042103">
    <property type="entry name" value="SerRS_1_N_sf"/>
</dbReference>
<dbReference type="InterPro" id="IPR033729">
    <property type="entry name" value="SerRS_core"/>
</dbReference>
<dbReference type="InterPro" id="IPR010978">
    <property type="entry name" value="tRNA-bd_arm"/>
</dbReference>
<dbReference type="NCBIfam" id="TIGR00414">
    <property type="entry name" value="serS"/>
    <property type="match status" value="1"/>
</dbReference>
<dbReference type="PANTHER" id="PTHR43697:SF1">
    <property type="entry name" value="SERINE--TRNA LIGASE"/>
    <property type="match status" value="1"/>
</dbReference>
<dbReference type="PANTHER" id="PTHR43697">
    <property type="entry name" value="SERYL-TRNA SYNTHETASE"/>
    <property type="match status" value="1"/>
</dbReference>
<dbReference type="Pfam" id="PF02403">
    <property type="entry name" value="Seryl_tRNA_N"/>
    <property type="match status" value="1"/>
</dbReference>
<dbReference type="Pfam" id="PF00587">
    <property type="entry name" value="tRNA-synt_2b"/>
    <property type="match status" value="1"/>
</dbReference>
<dbReference type="PIRSF" id="PIRSF001529">
    <property type="entry name" value="Ser-tRNA-synth_IIa"/>
    <property type="match status" value="1"/>
</dbReference>
<dbReference type="PRINTS" id="PR00981">
    <property type="entry name" value="TRNASYNTHSER"/>
</dbReference>
<dbReference type="SUPFAM" id="SSF55681">
    <property type="entry name" value="Class II aaRS and biotin synthetases"/>
    <property type="match status" value="1"/>
</dbReference>
<dbReference type="SUPFAM" id="SSF46589">
    <property type="entry name" value="tRNA-binding arm"/>
    <property type="match status" value="1"/>
</dbReference>
<dbReference type="PROSITE" id="PS50862">
    <property type="entry name" value="AA_TRNA_LIGASE_II"/>
    <property type="match status" value="1"/>
</dbReference>
<name>SYS_SHESW</name>
<accession>A1RJJ4</accession>
<proteinExistence type="inferred from homology"/>
<comment type="function">
    <text evidence="1">Catalyzes the attachment of serine to tRNA(Ser). Is also able to aminoacylate tRNA(Sec) with serine, to form the misacylated tRNA L-seryl-tRNA(Sec), which will be further converted into selenocysteinyl-tRNA(Sec).</text>
</comment>
<comment type="catalytic activity">
    <reaction evidence="1">
        <text>tRNA(Ser) + L-serine + ATP = L-seryl-tRNA(Ser) + AMP + diphosphate + H(+)</text>
        <dbReference type="Rhea" id="RHEA:12292"/>
        <dbReference type="Rhea" id="RHEA-COMP:9669"/>
        <dbReference type="Rhea" id="RHEA-COMP:9703"/>
        <dbReference type="ChEBI" id="CHEBI:15378"/>
        <dbReference type="ChEBI" id="CHEBI:30616"/>
        <dbReference type="ChEBI" id="CHEBI:33019"/>
        <dbReference type="ChEBI" id="CHEBI:33384"/>
        <dbReference type="ChEBI" id="CHEBI:78442"/>
        <dbReference type="ChEBI" id="CHEBI:78533"/>
        <dbReference type="ChEBI" id="CHEBI:456215"/>
        <dbReference type="EC" id="6.1.1.11"/>
    </reaction>
</comment>
<comment type="catalytic activity">
    <reaction evidence="1">
        <text>tRNA(Sec) + L-serine + ATP = L-seryl-tRNA(Sec) + AMP + diphosphate + H(+)</text>
        <dbReference type="Rhea" id="RHEA:42580"/>
        <dbReference type="Rhea" id="RHEA-COMP:9742"/>
        <dbReference type="Rhea" id="RHEA-COMP:10128"/>
        <dbReference type="ChEBI" id="CHEBI:15378"/>
        <dbReference type="ChEBI" id="CHEBI:30616"/>
        <dbReference type="ChEBI" id="CHEBI:33019"/>
        <dbReference type="ChEBI" id="CHEBI:33384"/>
        <dbReference type="ChEBI" id="CHEBI:78442"/>
        <dbReference type="ChEBI" id="CHEBI:78533"/>
        <dbReference type="ChEBI" id="CHEBI:456215"/>
        <dbReference type="EC" id="6.1.1.11"/>
    </reaction>
</comment>
<comment type="pathway">
    <text evidence="1">Aminoacyl-tRNA biosynthesis; selenocysteinyl-tRNA(Sec) biosynthesis; L-seryl-tRNA(Sec) from L-serine and tRNA(Sec): step 1/1.</text>
</comment>
<comment type="subunit">
    <text evidence="1">Homodimer. The tRNA molecule binds across the dimer.</text>
</comment>
<comment type="subcellular location">
    <subcellularLocation>
        <location evidence="1">Cytoplasm</location>
    </subcellularLocation>
</comment>
<comment type="domain">
    <text evidence="1">Consists of two distinct domains, a catalytic core and a N-terminal extension that is involved in tRNA binding.</text>
</comment>
<comment type="similarity">
    <text evidence="1">Belongs to the class-II aminoacyl-tRNA synthetase family. Type-1 seryl-tRNA synthetase subfamily.</text>
</comment>
<organism>
    <name type="scientific">Shewanella sp. (strain W3-18-1)</name>
    <dbReference type="NCBI Taxonomy" id="351745"/>
    <lineage>
        <taxon>Bacteria</taxon>
        <taxon>Pseudomonadati</taxon>
        <taxon>Pseudomonadota</taxon>
        <taxon>Gammaproteobacteria</taxon>
        <taxon>Alteromonadales</taxon>
        <taxon>Shewanellaceae</taxon>
        <taxon>Shewanella</taxon>
    </lineage>
</organism>
<reference key="1">
    <citation type="submission" date="2006-12" db="EMBL/GenBank/DDBJ databases">
        <title>Complete sequence of Shewanella sp. W3-18-1.</title>
        <authorList>
            <consortium name="US DOE Joint Genome Institute"/>
            <person name="Copeland A."/>
            <person name="Lucas S."/>
            <person name="Lapidus A."/>
            <person name="Barry K."/>
            <person name="Detter J.C."/>
            <person name="Glavina del Rio T."/>
            <person name="Hammon N."/>
            <person name="Israni S."/>
            <person name="Dalin E."/>
            <person name="Tice H."/>
            <person name="Pitluck S."/>
            <person name="Chain P."/>
            <person name="Malfatti S."/>
            <person name="Shin M."/>
            <person name="Vergez L."/>
            <person name="Schmutz J."/>
            <person name="Larimer F."/>
            <person name="Land M."/>
            <person name="Hauser L."/>
            <person name="Kyrpides N."/>
            <person name="Lykidis A."/>
            <person name="Tiedje J."/>
            <person name="Richardson P."/>
        </authorList>
    </citation>
    <scope>NUCLEOTIDE SEQUENCE [LARGE SCALE GENOMIC DNA]</scope>
    <source>
        <strain>W3-18-1</strain>
    </source>
</reference>
<evidence type="ECO:0000255" key="1">
    <source>
        <dbReference type="HAMAP-Rule" id="MF_00176"/>
    </source>
</evidence>
<feature type="chain" id="PRO_1000019818" description="Serine--tRNA ligase">
    <location>
        <begin position="1"/>
        <end position="428"/>
    </location>
</feature>
<feature type="binding site" evidence="1">
    <location>
        <begin position="235"/>
        <end position="237"/>
    </location>
    <ligand>
        <name>L-serine</name>
        <dbReference type="ChEBI" id="CHEBI:33384"/>
    </ligand>
</feature>
<feature type="binding site" evidence="1">
    <location>
        <begin position="266"/>
        <end position="268"/>
    </location>
    <ligand>
        <name>ATP</name>
        <dbReference type="ChEBI" id="CHEBI:30616"/>
    </ligand>
</feature>
<feature type="binding site" evidence="1">
    <location>
        <position position="289"/>
    </location>
    <ligand>
        <name>L-serine</name>
        <dbReference type="ChEBI" id="CHEBI:33384"/>
    </ligand>
</feature>
<feature type="binding site" evidence="1">
    <location>
        <begin position="353"/>
        <end position="356"/>
    </location>
    <ligand>
        <name>ATP</name>
        <dbReference type="ChEBI" id="CHEBI:30616"/>
    </ligand>
</feature>
<feature type="binding site" evidence="1">
    <location>
        <position position="389"/>
    </location>
    <ligand>
        <name>L-serine</name>
        <dbReference type="ChEBI" id="CHEBI:33384"/>
    </ligand>
</feature>